<gene>
    <name type="primary">EXOC8</name>
    <name type="ORF">RCJMB04_20o3</name>
</gene>
<protein>
    <recommendedName>
        <fullName>Exocyst complex component 8</fullName>
    </recommendedName>
</protein>
<sequence length="708" mass="80430">MALALGEGGGGSRLRRQLESGGFAAAEYVKQLSQQSDGDRDLQEHRQRIQALQEETAQSLKRNVYQNYRQFIETAREISYLESEMYQLSHILTEQKGIMEAVTQALLLQADRDDPALGARRAAAADPFLPLSAKEAAASEEGRQRTLTTLLEKVEGCRDLLPESPGKYLVYNGDLLEYDADHMAQIQRVHAFLMNDCLLVATALPNRRGAYRYDALYPLEGLAVVNVKDNPPMKDMFKLLMFPESRIFQAENAKIKKEWLEVLEETKRNRALSEKRRLEQEALPRPAPTPPESTNPFEEEEEEEEEPSAEEEAVDLSLEWIQELPEDLDVCIAQRDFEGAVDLLDKLNEYLADKPVSQPVKELRAKVDERVRQLTDVLVFELSPDRSLRGGPRATRRAVSQLIRLGQSTKACELFLKNRAAAVHTAIRQLRIEGATLLYIHKLCHVFFTSLLETAREFETDFAGNNGCYSAFVVWARSSMRMFVDAFSKQVFDSKESLSTAAECVKVAKEHCKQLSDIGLDLTFIIHALLVKDIKGALQSYKDIIIEATKHRNSEEMWRRMNLMTPEALGKLREEMKSCGVGSFDQYTGDDCWVNLSYTVVAFTKQTMAFLEEALKLYFPELHMVLLESLVEIILVAVQHVDYSLRCEQDPEKKAFIRQNASFLYETVLPVVEKRFEEGVGKPAKQLQDLRNASRLMRINPESTTSVV</sequence>
<reference key="1">
    <citation type="journal article" date="2005" name="Genome Biol.">
        <title>Full-length cDNAs from chicken bursal lymphocytes to facilitate gene function analysis.</title>
        <authorList>
            <person name="Caldwell R.B."/>
            <person name="Kierzek A.M."/>
            <person name="Arakawa H."/>
            <person name="Bezzubov Y."/>
            <person name="Zaim J."/>
            <person name="Fiedler P."/>
            <person name="Kutter S."/>
            <person name="Blagodatski A."/>
            <person name="Kostovska D."/>
            <person name="Koter M."/>
            <person name="Plachy J."/>
            <person name="Carninci P."/>
            <person name="Hayashizaki Y."/>
            <person name="Buerstedde J.-M."/>
        </authorList>
    </citation>
    <scope>NUCLEOTIDE SEQUENCE [LARGE SCALE MRNA]</scope>
    <source>
        <strain>CB</strain>
        <tissue>Bursa of Fabricius</tissue>
    </source>
</reference>
<organism>
    <name type="scientific">Gallus gallus</name>
    <name type="common">Chicken</name>
    <dbReference type="NCBI Taxonomy" id="9031"/>
    <lineage>
        <taxon>Eukaryota</taxon>
        <taxon>Metazoa</taxon>
        <taxon>Chordata</taxon>
        <taxon>Craniata</taxon>
        <taxon>Vertebrata</taxon>
        <taxon>Euteleostomi</taxon>
        <taxon>Archelosauria</taxon>
        <taxon>Archosauria</taxon>
        <taxon>Dinosauria</taxon>
        <taxon>Saurischia</taxon>
        <taxon>Theropoda</taxon>
        <taxon>Coelurosauria</taxon>
        <taxon>Aves</taxon>
        <taxon>Neognathae</taxon>
        <taxon>Galloanserae</taxon>
        <taxon>Galliformes</taxon>
        <taxon>Phasianidae</taxon>
        <taxon>Phasianinae</taxon>
        <taxon>Gallus</taxon>
    </lineage>
</organism>
<evidence type="ECO:0000250" key="1"/>
<evidence type="ECO:0000250" key="2">
    <source>
        <dbReference type="UniProtKB" id="O54924"/>
    </source>
</evidence>
<evidence type="ECO:0000255" key="3">
    <source>
        <dbReference type="PROSITE-ProRule" id="PRU00145"/>
    </source>
</evidence>
<evidence type="ECO:0000256" key="4">
    <source>
        <dbReference type="SAM" id="MobiDB-lite"/>
    </source>
</evidence>
<evidence type="ECO:0000305" key="5"/>
<name>EXOC8_CHICK</name>
<dbReference type="EMBL" id="AJ720591">
    <property type="protein sequence ID" value="CAG32250.1"/>
    <property type="molecule type" value="mRNA"/>
</dbReference>
<dbReference type="RefSeq" id="NP_001006404.1">
    <property type="nucleotide sequence ID" value="NM_001006404.1"/>
</dbReference>
<dbReference type="SMR" id="Q5ZJ43"/>
<dbReference type="FunCoup" id="Q5ZJ43">
    <property type="interactions" value="2105"/>
</dbReference>
<dbReference type="STRING" id="9031.ENSGALP00000046241"/>
<dbReference type="GlyGen" id="Q5ZJ43">
    <property type="glycosylation" value="1 site"/>
</dbReference>
<dbReference type="PaxDb" id="9031-ENSGALP00000018004"/>
<dbReference type="GeneID" id="421531"/>
<dbReference type="KEGG" id="gga:421531"/>
<dbReference type="CTD" id="149371"/>
<dbReference type="VEuPathDB" id="HostDB:geneid_421531"/>
<dbReference type="eggNOG" id="KOG2215">
    <property type="taxonomic scope" value="Eukaryota"/>
</dbReference>
<dbReference type="HOGENOM" id="CLU_025760_0_0_1"/>
<dbReference type="InParanoid" id="Q5ZJ43"/>
<dbReference type="OrthoDB" id="642193at2759"/>
<dbReference type="PhylomeDB" id="Q5ZJ43"/>
<dbReference type="PRO" id="PR:Q5ZJ43"/>
<dbReference type="Proteomes" id="UP000000539">
    <property type="component" value="Unassembled WGS sequence"/>
</dbReference>
<dbReference type="GO" id="GO:0000145">
    <property type="term" value="C:exocyst"/>
    <property type="evidence" value="ECO:0000318"/>
    <property type="project" value="GO_Central"/>
</dbReference>
<dbReference type="GO" id="GO:0030426">
    <property type="term" value="C:growth cone"/>
    <property type="evidence" value="ECO:0007669"/>
    <property type="project" value="UniProtKB-SubCell"/>
</dbReference>
<dbReference type="GO" id="GO:0048471">
    <property type="term" value="C:perinuclear region of cytoplasm"/>
    <property type="evidence" value="ECO:0007669"/>
    <property type="project" value="UniProtKB-SubCell"/>
</dbReference>
<dbReference type="GO" id="GO:0006887">
    <property type="term" value="P:exocytosis"/>
    <property type="evidence" value="ECO:0007669"/>
    <property type="project" value="UniProtKB-KW"/>
</dbReference>
<dbReference type="GO" id="GO:0006893">
    <property type="term" value="P:Golgi to plasma membrane transport"/>
    <property type="evidence" value="ECO:0000318"/>
    <property type="project" value="GO_Central"/>
</dbReference>
<dbReference type="GO" id="GO:0008104">
    <property type="term" value="P:protein localization"/>
    <property type="evidence" value="ECO:0000318"/>
    <property type="project" value="GO_Central"/>
</dbReference>
<dbReference type="GO" id="GO:0015031">
    <property type="term" value="P:protein transport"/>
    <property type="evidence" value="ECO:0007669"/>
    <property type="project" value="UniProtKB-KW"/>
</dbReference>
<dbReference type="CDD" id="cd01226">
    <property type="entry name" value="PH_RalBD_exo84"/>
    <property type="match status" value="1"/>
</dbReference>
<dbReference type="FunFam" id="1.20.58.1220:FF:000002">
    <property type="entry name" value="Exocyst complex component 8"/>
    <property type="match status" value="1"/>
</dbReference>
<dbReference type="FunFam" id="2.30.29.30:FF:000180">
    <property type="entry name" value="Exocyst complex component 8"/>
    <property type="match status" value="1"/>
</dbReference>
<dbReference type="FunFam" id="1.20.58.1210:FF:000001">
    <property type="entry name" value="exocyst complex component 8"/>
    <property type="match status" value="1"/>
</dbReference>
<dbReference type="Gene3D" id="1.20.58.1220">
    <property type="entry name" value="Exo84p, C-terminal helical domain"/>
    <property type="match status" value="1"/>
</dbReference>
<dbReference type="Gene3D" id="1.20.58.1210">
    <property type="entry name" value="Exo84p, N-terminal helical domain"/>
    <property type="match status" value="1"/>
</dbReference>
<dbReference type="Gene3D" id="2.30.29.30">
    <property type="entry name" value="Pleckstrin-homology domain (PH domain)/Phosphotyrosine-binding domain (PTB)"/>
    <property type="match status" value="1"/>
</dbReference>
<dbReference type="InterPro" id="IPR016159">
    <property type="entry name" value="Cullin_repeat-like_dom_sf"/>
</dbReference>
<dbReference type="InterPro" id="IPR033961">
    <property type="entry name" value="Exo84"/>
</dbReference>
<dbReference type="InterPro" id="IPR032403">
    <property type="entry name" value="Exo84_C"/>
</dbReference>
<dbReference type="InterPro" id="IPR042561">
    <property type="entry name" value="Exo84_C_1"/>
</dbReference>
<dbReference type="InterPro" id="IPR042560">
    <property type="entry name" value="Exo84_C_2"/>
</dbReference>
<dbReference type="InterPro" id="IPR011993">
    <property type="entry name" value="PH-like_dom_sf"/>
</dbReference>
<dbReference type="InterPro" id="IPR001849">
    <property type="entry name" value="PH_domain"/>
</dbReference>
<dbReference type="PANTHER" id="PTHR21426">
    <property type="entry name" value="EXOCYST COMPLEX COMPONENT 8"/>
    <property type="match status" value="1"/>
</dbReference>
<dbReference type="PANTHER" id="PTHR21426:SF12">
    <property type="entry name" value="EXOCYST COMPLEX COMPONENT 8"/>
    <property type="match status" value="1"/>
</dbReference>
<dbReference type="Pfam" id="PF16528">
    <property type="entry name" value="Exo84_C"/>
    <property type="match status" value="1"/>
</dbReference>
<dbReference type="Pfam" id="PF25345">
    <property type="entry name" value="PH_EXO84"/>
    <property type="match status" value="1"/>
</dbReference>
<dbReference type="Pfam" id="PF08700">
    <property type="entry name" value="VPS51_Exo84_N"/>
    <property type="match status" value="1"/>
</dbReference>
<dbReference type="SMART" id="SM00233">
    <property type="entry name" value="PH"/>
    <property type="match status" value="1"/>
</dbReference>
<dbReference type="SUPFAM" id="SSF74788">
    <property type="entry name" value="Cullin repeat-like"/>
    <property type="match status" value="1"/>
</dbReference>
<dbReference type="SUPFAM" id="SSF50729">
    <property type="entry name" value="PH domain-like"/>
    <property type="match status" value="1"/>
</dbReference>
<dbReference type="PROSITE" id="PS50003">
    <property type="entry name" value="PH_DOMAIN"/>
    <property type="match status" value="1"/>
</dbReference>
<keyword id="KW-0966">Cell projection</keyword>
<keyword id="KW-0963">Cytoplasm</keyword>
<keyword id="KW-0268">Exocytosis</keyword>
<keyword id="KW-0653">Protein transport</keyword>
<keyword id="KW-1185">Reference proteome</keyword>
<keyword id="KW-0813">Transport</keyword>
<accession>Q5ZJ43</accession>
<proteinExistence type="evidence at transcript level"/>
<comment type="function">
    <text evidence="1">Component of the exocyst complex involved in the docking of exocytic vesicles with fusion sites on the plasma membrane.</text>
</comment>
<comment type="subunit">
    <text evidence="2">The exocyst complex is composed of EXOC1, EXOC2, EXOC3, EXOC4, EXOC5, EXOC6, EXOC7 and EXOC8.</text>
</comment>
<comment type="subcellular location">
    <subcellularLocation>
        <location evidence="2">Cytoplasm</location>
    </subcellularLocation>
    <subcellularLocation>
        <location evidence="2">Cytoplasm</location>
        <location evidence="2">Perinuclear region</location>
    </subcellularLocation>
    <subcellularLocation>
        <location evidence="2">Cell projection</location>
        <location evidence="2">Growth cone</location>
    </subcellularLocation>
    <subcellularLocation>
        <location evidence="2">Cell projection</location>
    </subcellularLocation>
</comment>
<comment type="similarity">
    <text evidence="5">Belongs to the EXO84 family.</text>
</comment>
<feature type="chain" id="PRO_0000227553" description="Exocyst complex component 8">
    <location>
        <begin position="1"/>
        <end position="708"/>
    </location>
</feature>
<feature type="domain" description="PH" evidence="3">
    <location>
        <begin position="168"/>
        <end position="268"/>
    </location>
</feature>
<feature type="region of interest" description="Disordered" evidence="4">
    <location>
        <begin position="271"/>
        <end position="314"/>
    </location>
</feature>
<feature type="compositionally biased region" description="Basic and acidic residues" evidence="4">
    <location>
        <begin position="271"/>
        <end position="282"/>
    </location>
</feature>
<feature type="compositionally biased region" description="Acidic residues" evidence="4">
    <location>
        <begin position="297"/>
        <end position="314"/>
    </location>
</feature>